<accession>P07856</accession>
<accession>O96850</accession>
<accession>O96851</accession>
<accession>Q76B21</accession>
<accession>Q76B22</accession>
<accession>Q76B23</accession>
<gene>
    <name type="primary">ser1</name>
</gene>
<comment type="function">
    <text>Provides the silk fibroin thread with a sticky coating. Acts as a cement by sticking silk threads together.</text>
</comment>
<comment type="subcellular location">
    <subcellularLocation>
        <location>Secreted</location>
    </subcellularLocation>
</comment>
<comment type="alternative products">
    <event type="alternative splicing"/>
    <isoform>
        <id>P07856-1</id>
        <name>1B</name>
        <sequence type="displayed"/>
    </isoform>
    <isoform>
        <id>P07856-2</id>
        <name>1A</name>
        <sequence type="described" ref="VSP_012702"/>
    </isoform>
    <isoform>
        <id>P07856-3</id>
        <name>1A'</name>
        <sequence type="described" ref="VSP_012703"/>
    </isoform>
</comment>
<comment type="tissue specificity">
    <text>Produced exclusively in the middle (MSG) section of silk glands.</text>
</comment>
<comment type="biotechnology">
    <text evidence="3">Sericin is useful because of its properties. The protein resists oxidation, is antibacterial, UV resistant, and absorbs and releases moisture easily. Sericin can be cross-linked, copolymerized, and blended with other macromolecular materials, especially artificial polymers, to produce materials with improved properties. The protein is also used as an improving reagent or a coating material for natural and artificial fibers, fabrics, and articles. The materials modified with sericin and composites are useful as degradable biomaterials, biomedical materials, polymers for forming articles, functional membranes, fibers, and fabrics.</text>
</comment>
<comment type="miscellaneous">
    <text>The glue-like property of sericin is attributed to the hydrogen bonding between serine residues of sericin with serine residues in the fibroin structural components of silk fiber.</text>
</comment>
<proteinExistence type="evidence at protein level"/>
<sequence>MRFVLCCTLIALAALSVKAFGHHPGNRDTVEVKNRKYNAASSESSYLNKDNDSISAGAHRAKSVEQSQDKSKYTSGPEGVSYSGRSQNYKDSKQAYADYHSDPNGGSASAGQSRDSSLRERNVHYVSDGEAVAASSDARDENRSAQQNAQANWNADGSYGVSADRSGSASSRRRQANYYSDKDITAASKDDSRADSSRRSNAYYNRDSDGSESAGLSDRSASSSKNDNVFVYRTKDSIGGQAKSSRSSHSQESDAYYNSSPDGSYNAGTRDSSISNKKKASSTIYADKDQIRAANDRSSSKQLKQSSAQISSGPEGTSVSSKDRQYSNDKRSKSDAYVGRDGTVAYSNKDSEKTSRQSNTNYADQNSVRSDSAASDQTSKSYDRGYSDKNIVAHSSGSRGSQNQKSSSYRADKDGFSSSTNTEKSKFSSSNSVVETSDGASASRESSAEDTKSSNSNVQSDEKSASQSSSSRSSQESASYSSSSSSSTLSEDSSEVDIDLGNLGWWWNSDNKVQRAAGGATKSGASSSTQATTVSGADDSADSYTWWWNPRRSSSSSSSASSSSSGSNVGGSSQSSGSSTSGSNARGHLGTVSSTGSTSNTDSSSKSAGSRTSGGSSTYGYSSSHRGGSVSSTGSSSNTDSSTKNAGSSTSGGSSTYGYSSSHRGGSVSSTGSSSNTDSSTKSAGSSTSGGSSTYGYSSRHRGGRVSSTGSSSTTDASSNSVGSSTSGGSSTYGYSSNSRDGSVSSTGSSSNTDSNSNSAGSSTSGGSSTYGYSSNSRDGSVSSTGSSSNTDSNSNSAGSSTSGGSSTYGYSSNSRDGSVSSTGSSSNTDASTDLTGSSTSGGSSTYGYSSDSRDGSVSSTGSSSNTDASTDLAGSSTSGGSSTYGYSSDCGDGSVSSTGSSSNTDASTDLAGSSTSGGSSTYGYSSDSRDGSVSSTGSSSNTDASTDLAGSSTSGGSSTYGYSSNSRDGSVSSTGSSSNTDASTDLTGSSTSGGSSTYGYSSSNRDGSVLATGSSSNTDASTTEESTTSAGSSTEGYSSSSHDGSVTSTDGSSTSGGASSSSASTAKSDAASSEDGFWWWNRRKSGSGHKSATVQSSTTDKTSTDSASSTDSTSSTSGASTTTSGSSSTSGGSSTSDASSTSSSVSRSHHSGVNRLLHKPGQGKICLCFENIFDIPYHLRKNIGV</sequence>
<name>SERI1_BOMMO</name>
<dbReference type="EMBL" id="AB112019">
    <property type="protein sequence ID" value="BAD00698.1"/>
    <property type="molecule type" value="mRNA"/>
</dbReference>
<dbReference type="EMBL" id="AB112020">
    <property type="protein sequence ID" value="BAD00699.1"/>
    <property type="molecule type" value="mRNA"/>
</dbReference>
<dbReference type="EMBL" id="AB112021">
    <property type="protein sequence ID" value="BAD00700.1"/>
    <property type="molecule type" value="mRNA"/>
</dbReference>
<dbReference type="EMBL" id="AADK01002558">
    <property type="status" value="NOT_ANNOTATED_CDS"/>
    <property type="molecule type" value="Genomic_DNA"/>
</dbReference>
<dbReference type="EMBL" id="J01029">
    <property type="status" value="NOT_ANNOTATED_CDS"/>
    <property type="molecule type" value="Genomic_DNA"/>
</dbReference>
<dbReference type="EMBL" id="J01030">
    <property type="status" value="NOT_ANNOTATED_CDS"/>
    <property type="molecule type" value="Genomic_DNA"/>
</dbReference>
<dbReference type="EMBL" id="J01031">
    <property type="status" value="NOT_ANNOTATED_CDS"/>
    <property type="molecule type" value="Genomic_DNA"/>
</dbReference>
<dbReference type="EMBL" id="M26101">
    <property type="protein sequence ID" value="AAA27843.1"/>
    <property type="molecule type" value="mRNA"/>
</dbReference>
<dbReference type="EMBL" id="M26102">
    <property type="protein sequence ID" value="AAA27844.1"/>
    <property type="molecule type" value="mRNA"/>
</dbReference>
<dbReference type="EMBL" id="M26103">
    <property type="protein sequence ID" value="AAA27845.1"/>
    <property type="molecule type" value="mRNA"/>
</dbReference>
<dbReference type="EMBL" id="M26104">
    <property type="protein sequence ID" value="AAA27846.1"/>
    <property type="molecule type" value="mRNA"/>
</dbReference>
<dbReference type="STRING" id="7091.P07856"/>
<dbReference type="InParanoid" id="P07856"/>
<dbReference type="Proteomes" id="UP000005204">
    <property type="component" value="Unassembled WGS sequence"/>
</dbReference>
<dbReference type="GO" id="GO:0005576">
    <property type="term" value="C:extracellular region"/>
    <property type="evidence" value="ECO:0007669"/>
    <property type="project" value="UniProtKB-SubCell"/>
</dbReference>
<organism>
    <name type="scientific">Bombyx mori</name>
    <name type="common">Silk moth</name>
    <dbReference type="NCBI Taxonomy" id="7091"/>
    <lineage>
        <taxon>Eukaryota</taxon>
        <taxon>Metazoa</taxon>
        <taxon>Ecdysozoa</taxon>
        <taxon>Arthropoda</taxon>
        <taxon>Hexapoda</taxon>
        <taxon>Insecta</taxon>
        <taxon>Pterygota</taxon>
        <taxon>Neoptera</taxon>
        <taxon>Endopterygota</taxon>
        <taxon>Lepidoptera</taxon>
        <taxon>Glossata</taxon>
        <taxon>Ditrysia</taxon>
        <taxon>Bombycoidea</taxon>
        <taxon>Bombycidae</taxon>
        <taxon>Bombycinae</taxon>
        <taxon>Bombyx</taxon>
    </lineage>
</organism>
<evidence type="ECO:0000255" key="1"/>
<evidence type="ECO:0000256" key="2">
    <source>
        <dbReference type="SAM" id="MobiDB-lite"/>
    </source>
</evidence>
<evidence type="ECO:0000269" key="3">
    <source>
    </source>
</evidence>
<evidence type="ECO:0000303" key="4">
    <source>
    </source>
</evidence>
<evidence type="ECO:0000305" key="5"/>
<keyword id="KW-0025">Alternative splicing</keyword>
<keyword id="KW-0903">Direct protein sequencing</keyword>
<keyword id="KW-1185">Reference proteome</keyword>
<keyword id="KW-0677">Repeat</keyword>
<keyword id="KW-0964">Secreted</keyword>
<keyword id="KW-0732">Signal</keyword>
<keyword id="KW-0737">Silk protein</keyword>
<reference key="1">
    <citation type="journal article" date="2003" name="Biotechnol. Lett.">
        <title>The silk protein, sericin, protects against cell death caused by acute serum deprivation in insect cell culture.</title>
        <authorList>
            <person name="Takahashi M."/>
            <person name="Tsujimoto K."/>
            <person name="Yamada H."/>
            <person name="Takagi H."/>
            <person name="Nakamori S."/>
        </authorList>
    </citation>
    <scope>NUCLEOTIDE SEQUENCE [MRNA] (ISOFORMS 1A; 1A' AND 1B)</scope>
    <source>
        <strain>Kinshu X Showa</strain>
        <tissue>Middle silk gland</tissue>
    </source>
</reference>
<reference key="2">
    <citation type="journal article" date="2004" name="Science">
        <title>A draft sequence for the genome of the domesticated silkworm (Bombyx mori).</title>
        <authorList>
            <person name="Xia Q."/>
            <person name="Zhou Z."/>
            <person name="Lu C."/>
            <person name="Cheng D."/>
            <person name="Dai F."/>
            <person name="Li B."/>
            <person name="Zhao P."/>
            <person name="Zha X."/>
            <person name="Cheng T."/>
            <person name="Chai C."/>
            <person name="Pan G."/>
            <person name="Xu J."/>
            <person name="Liu C."/>
            <person name="Lin Y."/>
            <person name="Qian J."/>
            <person name="Hou Y."/>
            <person name="Wu Z."/>
            <person name="Li G."/>
            <person name="Pan M."/>
            <person name="Li C."/>
            <person name="Shen Y."/>
            <person name="Lan X."/>
            <person name="Yuan L."/>
            <person name="Li T."/>
            <person name="Xu H."/>
            <person name="Yang G."/>
            <person name="Wan Y."/>
            <person name="Zhu Y."/>
            <person name="Yu M."/>
            <person name="Shen W."/>
            <person name="Wu D."/>
            <person name="Xiang Z."/>
            <person name="Yu J."/>
            <person name="Wang J."/>
            <person name="Li R."/>
            <person name="Shi J."/>
            <person name="Li H."/>
            <person name="Li G."/>
            <person name="Su J."/>
            <person name="Wang X."/>
            <person name="Li G."/>
            <person name="Zhang Z."/>
            <person name="Wu Q."/>
            <person name="Li J."/>
            <person name="Zhang Q."/>
            <person name="Wei N."/>
            <person name="Xu J."/>
            <person name="Sun H."/>
            <person name="Dong L."/>
            <person name="Liu D."/>
            <person name="Zhao S."/>
            <person name="Zhao X."/>
            <person name="Meng Q."/>
            <person name="Lan F."/>
            <person name="Huang X."/>
            <person name="Li Y."/>
            <person name="Fang L."/>
            <person name="Li C."/>
            <person name="Li D."/>
            <person name="Sun Y."/>
            <person name="Zhang Z."/>
            <person name="Yang Z."/>
            <person name="Huang Y."/>
            <person name="Xi Y."/>
            <person name="Qi Q."/>
            <person name="He D."/>
            <person name="Huang H."/>
            <person name="Zhang X."/>
            <person name="Wang Z."/>
            <person name="Li W."/>
            <person name="Cao Y."/>
            <person name="Yu Y."/>
            <person name="Yu H."/>
            <person name="Li J."/>
            <person name="Ye J."/>
            <person name="Chen H."/>
            <person name="Zhou Y."/>
            <person name="Liu B."/>
            <person name="Wang J."/>
            <person name="Ye J."/>
            <person name="Ji H."/>
            <person name="Li S."/>
            <person name="Ni P."/>
            <person name="Zhang J."/>
            <person name="Zhang Y."/>
            <person name="Zheng H."/>
            <person name="Mao B."/>
            <person name="Wang W."/>
            <person name="Ye C."/>
            <person name="Li S."/>
            <person name="Wang J."/>
            <person name="Wong G.K.-S."/>
            <person name="Yang H."/>
        </authorList>
    </citation>
    <scope>NUCLEOTIDE SEQUENCE [LARGE SCALE GENOMIC DNA]</scope>
    <source>
        <strain>p50T</strain>
    </source>
</reference>
<reference key="3">
    <citation type="journal article" date="1982" name="J. Biol. Chem.">
        <title>Structural analysis of sericin genes. Homologies with fibroin gene in the 5' flanking nucleotide sequences.</title>
        <authorList>
            <person name="Okamoto H."/>
            <person name="Ishikawa E."/>
            <person name="Suzuki Y."/>
        </authorList>
    </citation>
    <scope>NUCLEOTIDE SEQUENCE [GENOMIC DNA] OF 1-5; 14-23 AND 25-95</scope>
    <source>
        <tissue>Middle silk gland</tissue>
    </source>
</reference>
<reference key="4">
    <citation type="submission" date="2009-08" db="UniProtKB">
        <authorList>
            <person name="Lubec G."/>
            <person name="Chen W.-Q."/>
        </authorList>
    </citation>
    <scope>PROTEIN SEQUENCE OF 37-49; 73-85; 122-139; 305-322; 427-444; 489-504; 515-606; 612-889; 906-1006; 1049-1148 AND 1166-1186</scope>
    <scope>IDENTIFICATION BY MASS SPECTROMETRY</scope>
</reference>
<reference key="5">
    <citation type="journal article" date="1986" name="Biochimie">
        <title>A single gene produces multiple sericin messenger RNAs in the silk gland of Bombyx mori.</title>
        <authorList>
            <person name="Michaille J.-J."/>
            <person name="Couble P."/>
            <person name="Prudhomme J.-C."/>
            <person name="Garel A."/>
        </authorList>
    </citation>
    <scope>NUCLEOTIDE SEQUENCE OF 647-683 AND 761-798</scope>
</reference>
<reference key="6">
    <citation type="journal article" date="2002" name="Biotechnol. Adv.">
        <title>Applications of natural silk protein sericin in biomaterials.</title>
        <authorList>
            <person name="Zhang Y.Q."/>
        </authorList>
    </citation>
    <scope>BIOTECHNOLOGICAL RELEVANCE</scope>
</reference>
<protein>
    <recommendedName>
        <fullName>Sericin 1</fullName>
    </recommendedName>
    <alternativeName>
        <fullName>Silk gum protein</fullName>
    </alternativeName>
</protein>
<feature type="signal peptide" evidence="1">
    <location>
        <begin position="1"/>
        <end position="21"/>
    </location>
</feature>
<feature type="chain" id="PRO_0000022321" description="Sericin 1">
    <location>
        <begin position="22"/>
        <end position="1186"/>
    </location>
</feature>
<feature type="repeat" description="1">
    <location>
        <begin position="593"/>
        <end position="630"/>
    </location>
</feature>
<feature type="repeat" description="2">
    <location>
        <begin position="631"/>
        <end position="668"/>
    </location>
</feature>
<feature type="repeat" description="3">
    <location>
        <begin position="669"/>
        <end position="706"/>
    </location>
</feature>
<feature type="repeat" description="4">
    <location>
        <begin position="707"/>
        <end position="744"/>
    </location>
</feature>
<feature type="repeat" description="5">
    <location>
        <begin position="745"/>
        <end position="782"/>
    </location>
</feature>
<feature type="repeat" description="6">
    <location>
        <begin position="783"/>
        <end position="820"/>
    </location>
</feature>
<feature type="repeat" description="7">
    <location>
        <begin position="821"/>
        <end position="858"/>
    </location>
</feature>
<feature type="repeat" description="8">
    <location>
        <begin position="859"/>
        <end position="896"/>
    </location>
</feature>
<feature type="repeat" description="9">
    <location>
        <begin position="897"/>
        <end position="934"/>
    </location>
</feature>
<feature type="repeat" description="10">
    <location>
        <begin position="935"/>
        <end position="972"/>
    </location>
</feature>
<feature type="repeat" description="11">
    <location>
        <begin position="973"/>
        <end position="1010"/>
    </location>
</feature>
<feature type="region of interest" description="Disordered" evidence="2">
    <location>
        <begin position="39"/>
        <end position="119"/>
    </location>
</feature>
<feature type="region of interest" description="Disordered" evidence="2">
    <location>
        <begin position="131"/>
        <end position="494"/>
    </location>
</feature>
<feature type="region of interest" description="Disordered" evidence="2">
    <location>
        <begin position="518"/>
        <end position="1157"/>
    </location>
</feature>
<feature type="compositionally biased region" description="Polar residues" evidence="2">
    <location>
        <begin position="39"/>
        <end position="48"/>
    </location>
</feature>
<feature type="compositionally biased region" description="Polar residues" evidence="2">
    <location>
        <begin position="104"/>
        <end position="115"/>
    </location>
</feature>
<feature type="compositionally biased region" description="Low complexity" evidence="2">
    <location>
        <begin position="145"/>
        <end position="155"/>
    </location>
</feature>
<feature type="compositionally biased region" description="Basic and acidic residues" evidence="2">
    <location>
        <begin position="180"/>
        <end position="198"/>
    </location>
</feature>
<feature type="compositionally biased region" description="Low complexity" evidence="2">
    <location>
        <begin position="211"/>
        <end position="224"/>
    </location>
</feature>
<feature type="compositionally biased region" description="Polar residues" evidence="2">
    <location>
        <begin position="256"/>
        <end position="275"/>
    </location>
</feature>
<feature type="compositionally biased region" description="Basic and acidic residues" evidence="2">
    <location>
        <begin position="286"/>
        <end position="299"/>
    </location>
</feature>
<feature type="compositionally biased region" description="Low complexity" evidence="2">
    <location>
        <begin position="300"/>
        <end position="312"/>
    </location>
</feature>
<feature type="compositionally biased region" description="Basic and acidic residues" evidence="2">
    <location>
        <begin position="321"/>
        <end position="334"/>
    </location>
</feature>
<feature type="compositionally biased region" description="Polar residues" evidence="2">
    <location>
        <begin position="356"/>
        <end position="380"/>
    </location>
</feature>
<feature type="compositionally biased region" description="Polar residues" evidence="2">
    <location>
        <begin position="393"/>
        <end position="409"/>
    </location>
</feature>
<feature type="compositionally biased region" description="Polar residues" evidence="2">
    <location>
        <begin position="416"/>
        <end position="445"/>
    </location>
</feature>
<feature type="compositionally biased region" description="Low complexity" evidence="2">
    <location>
        <begin position="465"/>
        <end position="491"/>
    </location>
</feature>
<feature type="compositionally biased region" description="Low complexity" evidence="2">
    <location>
        <begin position="518"/>
        <end position="537"/>
    </location>
</feature>
<feature type="compositionally biased region" description="Low complexity" evidence="2">
    <location>
        <begin position="553"/>
        <end position="698"/>
    </location>
</feature>
<feature type="compositionally biased region" description="Low complexity" evidence="2">
    <location>
        <begin position="705"/>
        <end position="1004"/>
    </location>
</feature>
<feature type="compositionally biased region" description="Low complexity" evidence="2">
    <location>
        <begin position="1015"/>
        <end position="1075"/>
    </location>
</feature>
<feature type="compositionally biased region" description="Low complexity" evidence="2">
    <location>
        <begin position="1097"/>
        <end position="1145"/>
    </location>
</feature>
<feature type="compositionally biased region" description="Basic residues" evidence="2">
    <location>
        <begin position="1148"/>
        <end position="1157"/>
    </location>
</feature>
<feature type="splice variant" id="VSP_012702" description="In isoform 1A." evidence="4">
    <original>PGNRDTVEVKNRKYNAASSESSYLNKDNDSISAGAHRAKSVEQSQDKSKYTSGPEGVSYSGRSQNYKDSKQAYADYHSDPNGGSASAGQSRDSSLRERNVHYVSDGEAVAASSDARDENRSAQQNAQANWNADGSYGVSADRSGSASSRRRQANYYSDKDITAASKDDSRADSSRRSNAYYNRDSDGSESAGLSDRSASSSKNDNVFVYRTKDSIGGQAKSSRSSHSQESDAYYNSSPDGSYNAGTRDSSISNKKKASSTIYADKDQIRAANDRSSSKQLKQSSAQISSGPEGTSVSSKDRQYSNDKRSKSDAYVGRDGTVAYSNKDSEKTSRQSNTNYADQNSVRSDSAASDQTSKSYDRGYSDKNIVAHSSGSRGSQNQKSSSYRADKDGFSSSTNTEKSKFSSSNSVVETSDGASASRESSAEDTKSSNSNVQSD</original>
    <variation>QTGEEEELFDVVSYQKIEDGKPVIIMKVIPV</variation>
    <location>
        <begin position="24"/>
        <end position="461"/>
    </location>
</feature>
<feature type="splice variant" id="VSP_012703" description="In isoform 1A'." evidence="4">
    <location>
        <begin position="25"/>
        <end position="488"/>
    </location>
</feature>
<feature type="sequence conflict" description="In Ref. 1; BAD00700." evidence="5" ref="1">
    <original>D</original>
    <variation>A</variation>
    <location>
        <position position="50"/>
    </location>
</feature>
<feature type="sequence conflict" description="In Ref. 1; BAD00700." evidence="5" ref="1">
    <original>H</original>
    <variation>R</variation>
    <location>
        <position position="59"/>
    </location>
</feature>
<feature type="sequence conflict" description="In Ref. 1; BAD00699." evidence="5" ref="1">
    <original>V</original>
    <variation>A</variation>
    <location>
        <position position="513"/>
    </location>
</feature>
<feature type="sequence conflict" description="In Ref. 1; BAD00699." evidence="5" ref="1">
    <original>G</original>
    <variation>E</variation>
    <location>
        <position position="524"/>
    </location>
</feature>
<feature type="sequence conflict" description="In Ref. 1; BAD00699." evidence="5" ref="1">
    <original>L</original>
    <variation>S</variation>
    <location>
        <position position="1011"/>
    </location>
</feature>